<evidence type="ECO:0000255" key="1">
    <source>
        <dbReference type="HAMAP-Rule" id="MF_00251"/>
    </source>
</evidence>
<evidence type="ECO:0000305" key="2"/>
<gene>
    <name evidence="1" type="primary">rpmJ</name>
    <name type="ordered locus">M28_Spy0066</name>
</gene>
<proteinExistence type="inferred from homology"/>
<organism>
    <name type="scientific">Streptococcus pyogenes serotype M28 (strain MGAS6180)</name>
    <dbReference type="NCBI Taxonomy" id="319701"/>
    <lineage>
        <taxon>Bacteria</taxon>
        <taxon>Bacillati</taxon>
        <taxon>Bacillota</taxon>
        <taxon>Bacilli</taxon>
        <taxon>Lactobacillales</taxon>
        <taxon>Streptococcaceae</taxon>
        <taxon>Streptococcus</taxon>
    </lineage>
</organism>
<dbReference type="EMBL" id="CP000056">
    <property type="protein sequence ID" value="AAX71180.1"/>
    <property type="molecule type" value="Genomic_DNA"/>
</dbReference>
<dbReference type="RefSeq" id="WP_000868345.1">
    <property type="nucleotide sequence ID" value="NC_007296.2"/>
</dbReference>
<dbReference type="SMR" id="Q48VS6"/>
<dbReference type="GeneID" id="93860206"/>
<dbReference type="KEGG" id="spb:M28_Spy0066"/>
<dbReference type="HOGENOM" id="CLU_135723_6_2_9"/>
<dbReference type="GO" id="GO:0005737">
    <property type="term" value="C:cytoplasm"/>
    <property type="evidence" value="ECO:0007669"/>
    <property type="project" value="UniProtKB-ARBA"/>
</dbReference>
<dbReference type="GO" id="GO:1990904">
    <property type="term" value="C:ribonucleoprotein complex"/>
    <property type="evidence" value="ECO:0007669"/>
    <property type="project" value="UniProtKB-KW"/>
</dbReference>
<dbReference type="GO" id="GO:0005840">
    <property type="term" value="C:ribosome"/>
    <property type="evidence" value="ECO:0007669"/>
    <property type="project" value="UniProtKB-KW"/>
</dbReference>
<dbReference type="GO" id="GO:0003735">
    <property type="term" value="F:structural constituent of ribosome"/>
    <property type="evidence" value="ECO:0007669"/>
    <property type="project" value="InterPro"/>
</dbReference>
<dbReference type="GO" id="GO:0006412">
    <property type="term" value="P:translation"/>
    <property type="evidence" value="ECO:0007669"/>
    <property type="project" value="UniProtKB-UniRule"/>
</dbReference>
<dbReference type="HAMAP" id="MF_00251">
    <property type="entry name" value="Ribosomal_bL36"/>
    <property type="match status" value="1"/>
</dbReference>
<dbReference type="InterPro" id="IPR000473">
    <property type="entry name" value="Ribosomal_bL36"/>
</dbReference>
<dbReference type="InterPro" id="IPR035977">
    <property type="entry name" value="Ribosomal_bL36_sp"/>
</dbReference>
<dbReference type="NCBIfam" id="TIGR01022">
    <property type="entry name" value="rpmJ_bact"/>
    <property type="match status" value="1"/>
</dbReference>
<dbReference type="PANTHER" id="PTHR42888">
    <property type="entry name" value="50S RIBOSOMAL PROTEIN L36, CHLOROPLASTIC"/>
    <property type="match status" value="1"/>
</dbReference>
<dbReference type="PANTHER" id="PTHR42888:SF1">
    <property type="entry name" value="LARGE RIBOSOMAL SUBUNIT PROTEIN BL36C"/>
    <property type="match status" value="1"/>
</dbReference>
<dbReference type="Pfam" id="PF00444">
    <property type="entry name" value="Ribosomal_L36"/>
    <property type="match status" value="1"/>
</dbReference>
<dbReference type="SUPFAM" id="SSF57840">
    <property type="entry name" value="Ribosomal protein L36"/>
    <property type="match status" value="1"/>
</dbReference>
<dbReference type="PROSITE" id="PS00828">
    <property type="entry name" value="RIBOSOMAL_L36"/>
    <property type="match status" value="1"/>
</dbReference>
<accession>Q48VS6</accession>
<name>RL36_STRPM</name>
<keyword id="KW-0687">Ribonucleoprotein</keyword>
<keyword id="KW-0689">Ribosomal protein</keyword>
<reference key="1">
    <citation type="journal article" date="2005" name="J. Infect. Dis.">
        <title>Genome sequence of a serotype M28 strain of group A Streptococcus: potential new insights into puerperal sepsis and bacterial disease specificity.</title>
        <authorList>
            <person name="Green N.M."/>
            <person name="Zhang S."/>
            <person name="Porcella S.F."/>
            <person name="Nagiec M.J."/>
            <person name="Barbian K.D."/>
            <person name="Beres S.B."/>
            <person name="Lefebvre R.B."/>
            <person name="Musser J.M."/>
        </authorList>
    </citation>
    <scope>NUCLEOTIDE SEQUENCE [LARGE SCALE GENOMIC DNA]</scope>
    <source>
        <strain>MGAS6180</strain>
    </source>
</reference>
<comment type="similarity">
    <text evidence="1">Belongs to the bacterial ribosomal protein bL36 family.</text>
</comment>
<feature type="chain" id="PRO_0000302310" description="Large ribosomal subunit protein bL36">
    <location>
        <begin position="1"/>
        <end position="38"/>
    </location>
</feature>
<protein>
    <recommendedName>
        <fullName evidence="1">Large ribosomal subunit protein bL36</fullName>
    </recommendedName>
    <alternativeName>
        <fullName evidence="2">50S ribosomal protein L36</fullName>
    </alternativeName>
</protein>
<sequence>MKVRPSVKPICEYCKVIRRNGRVMVICPTNPKHKQRQG</sequence>